<feature type="chain" id="PRO_1000096503" description="Triosephosphate isomerase">
    <location>
        <begin position="1"/>
        <end position="234"/>
    </location>
</feature>
<feature type="active site" description="Electrophile" evidence="1">
    <location>
        <position position="90"/>
    </location>
</feature>
<feature type="active site" description="Proton acceptor" evidence="1">
    <location>
        <position position="159"/>
    </location>
</feature>
<feature type="binding site" evidence="1">
    <location>
        <begin position="8"/>
        <end position="10"/>
    </location>
    <ligand>
        <name>substrate</name>
    </ligand>
</feature>
<feature type="binding site" evidence="1">
    <location>
        <position position="165"/>
    </location>
    <ligand>
        <name>substrate</name>
    </ligand>
</feature>
<feature type="binding site" evidence="1">
    <location>
        <position position="197"/>
    </location>
    <ligand>
        <name>substrate</name>
    </ligand>
</feature>
<evidence type="ECO:0000255" key="1">
    <source>
        <dbReference type="HAMAP-Rule" id="MF_00147"/>
    </source>
</evidence>
<name>TPIS_HELP2</name>
<comment type="function">
    <text evidence="1">Involved in the gluconeogenesis. Catalyzes stereospecifically the conversion of dihydroxyacetone phosphate (DHAP) to D-glyceraldehyde-3-phosphate (G3P).</text>
</comment>
<comment type="catalytic activity">
    <reaction evidence="1">
        <text>D-glyceraldehyde 3-phosphate = dihydroxyacetone phosphate</text>
        <dbReference type="Rhea" id="RHEA:18585"/>
        <dbReference type="ChEBI" id="CHEBI:57642"/>
        <dbReference type="ChEBI" id="CHEBI:59776"/>
        <dbReference type="EC" id="5.3.1.1"/>
    </reaction>
</comment>
<comment type="pathway">
    <text evidence="1">Carbohydrate biosynthesis; gluconeogenesis.</text>
</comment>
<comment type="pathway">
    <text evidence="1">Carbohydrate degradation; glycolysis; D-glyceraldehyde 3-phosphate from glycerone phosphate: step 1/1.</text>
</comment>
<comment type="subunit">
    <text evidence="1">Homodimer.</text>
</comment>
<comment type="subcellular location">
    <subcellularLocation>
        <location evidence="1">Cytoplasm</location>
    </subcellularLocation>
</comment>
<comment type="similarity">
    <text evidence="1">Belongs to the triosephosphate isomerase family.</text>
</comment>
<sequence>MTKIAMANFKSAMPIFKSHAYLKELEKTLKPQHFDRVFVFPDFLGLLPNSFLHFTLGAQNAYPRDCGAFTGEITSKHLEELKIHTLLIGHSERRTLLKESPSFLKEKFDFFKDKNFKIVYCIGEDLTTREKGFRAVKEFLSEQLENIDLNYSNLIVAYEPIWAIGTKKSASLEDIYLTHGFLKQILNQKTPLLYGGSVNVQNAKEILGIDSVDGLLIGSASWELENFKTIISFL</sequence>
<organism>
    <name type="scientific">Helicobacter pylori (strain P12)</name>
    <dbReference type="NCBI Taxonomy" id="570508"/>
    <lineage>
        <taxon>Bacteria</taxon>
        <taxon>Pseudomonadati</taxon>
        <taxon>Campylobacterota</taxon>
        <taxon>Epsilonproteobacteria</taxon>
        <taxon>Campylobacterales</taxon>
        <taxon>Helicobacteraceae</taxon>
        <taxon>Helicobacter</taxon>
    </lineage>
</organism>
<gene>
    <name evidence="1" type="primary">tpiA</name>
    <name type="ordered locus">HPP12_0195</name>
</gene>
<proteinExistence type="inferred from homology"/>
<keyword id="KW-0963">Cytoplasm</keyword>
<keyword id="KW-0312">Gluconeogenesis</keyword>
<keyword id="KW-0324">Glycolysis</keyword>
<keyword id="KW-0413">Isomerase</keyword>
<reference key="1">
    <citation type="submission" date="2008-10" db="EMBL/GenBank/DDBJ databases">
        <title>The complete genome sequence of Helicobacter pylori strain P12.</title>
        <authorList>
            <person name="Fischer W."/>
            <person name="Windhager L."/>
            <person name="Karnholz A."/>
            <person name="Zeiller M."/>
            <person name="Zimmer R."/>
            <person name="Haas R."/>
        </authorList>
    </citation>
    <scope>NUCLEOTIDE SEQUENCE [LARGE SCALE GENOMIC DNA]</scope>
    <source>
        <strain>P12</strain>
    </source>
</reference>
<protein>
    <recommendedName>
        <fullName evidence="1">Triosephosphate isomerase</fullName>
        <shortName evidence="1">TIM</shortName>
        <shortName evidence="1">TPI</shortName>
        <ecNumber evidence="1">5.3.1.1</ecNumber>
    </recommendedName>
    <alternativeName>
        <fullName evidence="1">Triose-phosphate isomerase</fullName>
    </alternativeName>
</protein>
<accession>B6JPU4</accession>
<dbReference type="EC" id="5.3.1.1" evidence="1"/>
<dbReference type="EMBL" id="CP001217">
    <property type="protein sequence ID" value="ACJ07355.1"/>
    <property type="molecule type" value="Genomic_DNA"/>
</dbReference>
<dbReference type="SMR" id="B6JPU4"/>
<dbReference type="KEGG" id="hpp:HPP12_0195"/>
<dbReference type="HOGENOM" id="CLU_024251_2_3_7"/>
<dbReference type="UniPathway" id="UPA00109">
    <property type="reaction ID" value="UER00189"/>
</dbReference>
<dbReference type="UniPathway" id="UPA00138"/>
<dbReference type="Proteomes" id="UP000008198">
    <property type="component" value="Chromosome"/>
</dbReference>
<dbReference type="GO" id="GO:0005829">
    <property type="term" value="C:cytosol"/>
    <property type="evidence" value="ECO:0007669"/>
    <property type="project" value="TreeGrafter"/>
</dbReference>
<dbReference type="GO" id="GO:0004807">
    <property type="term" value="F:triose-phosphate isomerase activity"/>
    <property type="evidence" value="ECO:0007669"/>
    <property type="project" value="UniProtKB-UniRule"/>
</dbReference>
<dbReference type="GO" id="GO:0006094">
    <property type="term" value="P:gluconeogenesis"/>
    <property type="evidence" value="ECO:0007669"/>
    <property type="project" value="UniProtKB-UniRule"/>
</dbReference>
<dbReference type="GO" id="GO:0046166">
    <property type="term" value="P:glyceraldehyde-3-phosphate biosynthetic process"/>
    <property type="evidence" value="ECO:0007669"/>
    <property type="project" value="TreeGrafter"/>
</dbReference>
<dbReference type="GO" id="GO:0019563">
    <property type="term" value="P:glycerol catabolic process"/>
    <property type="evidence" value="ECO:0007669"/>
    <property type="project" value="TreeGrafter"/>
</dbReference>
<dbReference type="GO" id="GO:0006096">
    <property type="term" value="P:glycolytic process"/>
    <property type="evidence" value="ECO:0007669"/>
    <property type="project" value="UniProtKB-UniRule"/>
</dbReference>
<dbReference type="CDD" id="cd00311">
    <property type="entry name" value="TIM"/>
    <property type="match status" value="1"/>
</dbReference>
<dbReference type="FunFam" id="3.20.20.70:FF:000293">
    <property type="entry name" value="Triosephosphate isomerase"/>
    <property type="match status" value="1"/>
</dbReference>
<dbReference type="Gene3D" id="3.20.20.70">
    <property type="entry name" value="Aldolase class I"/>
    <property type="match status" value="1"/>
</dbReference>
<dbReference type="HAMAP" id="MF_00147_B">
    <property type="entry name" value="TIM_B"/>
    <property type="match status" value="1"/>
</dbReference>
<dbReference type="InterPro" id="IPR013785">
    <property type="entry name" value="Aldolase_TIM"/>
</dbReference>
<dbReference type="InterPro" id="IPR035990">
    <property type="entry name" value="TIM_sf"/>
</dbReference>
<dbReference type="InterPro" id="IPR022896">
    <property type="entry name" value="TrioseP_Isoase_bac/euk"/>
</dbReference>
<dbReference type="InterPro" id="IPR000652">
    <property type="entry name" value="Triosephosphate_isomerase"/>
</dbReference>
<dbReference type="InterPro" id="IPR020861">
    <property type="entry name" value="Triosephosphate_isomerase_AS"/>
</dbReference>
<dbReference type="NCBIfam" id="NF000728">
    <property type="entry name" value="PRK00042.3-2"/>
    <property type="match status" value="1"/>
</dbReference>
<dbReference type="NCBIfam" id="NF000729">
    <property type="entry name" value="PRK00042.3-3"/>
    <property type="match status" value="1"/>
</dbReference>
<dbReference type="PANTHER" id="PTHR21139">
    <property type="entry name" value="TRIOSEPHOSPHATE ISOMERASE"/>
    <property type="match status" value="1"/>
</dbReference>
<dbReference type="PANTHER" id="PTHR21139:SF42">
    <property type="entry name" value="TRIOSEPHOSPHATE ISOMERASE"/>
    <property type="match status" value="1"/>
</dbReference>
<dbReference type="Pfam" id="PF00121">
    <property type="entry name" value="TIM"/>
    <property type="match status" value="1"/>
</dbReference>
<dbReference type="SUPFAM" id="SSF51351">
    <property type="entry name" value="Triosephosphate isomerase (TIM)"/>
    <property type="match status" value="1"/>
</dbReference>
<dbReference type="PROSITE" id="PS00171">
    <property type="entry name" value="TIM_1"/>
    <property type="match status" value="1"/>
</dbReference>
<dbReference type="PROSITE" id="PS51440">
    <property type="entry name" value="TIM_2"/>
    <property type="match status" value="1"/>
</dbReference>